<feature type="chain" id="PRO_0000246991" description="7-cyano-7-deazaguanine synthase 1">
    <location>
        <begin position="1"/>
        <end position="202"/>
    </location>
</feature>
<feature type="binding site" evidence="1">
    <location>
        <begin position="7"/>
        <end position="17"/>
    </location>
    <ligand>
        <name>ATP</name>
        <dbReference type="ChEBI" id="CHEBI:30616"/>
    </ligand>
</feature>
<feature type="binding site" evidence="1">
    <location>
        <position position="166"/>
    </location>
    <ligand>
        <name>Zn(2+)</name>
        <dbReference type="ChEBI" id="CHEBI:29105"/>
    </ligand>
</feature>
<feature type="binding site" evidence="1">
    <location>
        <position position="174"/>
    </location>
    <ligand>
        <name>Zn(2+)</name>
        <dbReference type="ChEBI" id="CHEBI:29105"/>
    </ligand>
</feature>
<feature type="binding site" evidence="1">
    <location>
        <position position="177"/>
    </location>
    <ligand>
        <name>Zn(2+)</name>
        <dbReference type="ChEBI" id="CHEBI:29105"/>
    </ligand>
</feature>
<feature type="binding site" evidence="1">
    <location>
        <position position="180"/>
    </location>
    <ligand>
        <name>Zn(2+)</name>
        <dbReference type="ChEBI" id="CHEBI:29105"/>
    </ligand>
</feature>
<gene>
    <name type="primary">queC1</name>
    <name type="ordered locus">STK_18920</name>
</gene>
<sequence length="202" mass="22936">MKALLLMSGGLDSSSAAYYYTRRGLDFDCLFINYGQRSARMQLRSSKIICEKLNKKLLVADIRKIRELFISDIWLKPHEPITHRNLVIIPIAIAFAKEKGYEEIIIASVKEDCEYEQNRIEIIKELKNLGEILKVKVSTPFAGMPKSFLLKLGVSAGLDPSLTYSCLLGHKYHCGQCSQCLKRKEAFKSANIQDPTKYLNLS</sequence>
<comment type="function">
    <text evidence="1">Catalyzes the ATP-dependent conversion of 7-carboxy-7-deazaguanine (CDG) to 7-cyano-7-deazaguanine (preQ(0)).</text>
</comment>
<comment type="catalytic activity">
    <reaction>
        <text>7-carboxy-7-deazaguanine + NH4(+) + ATP = 7-cyano-7-deazaguanine + ADP + phosphate + H2O + H(+)</text>
        <dbReference type="Rhea" id="RHEA:27982"/>
        <dbReference type="ChEBI" id="CHEBI:15377"/>
        <dbReference type="ChEBI" id="CHEBI:15378"/>
        <dbReference type="ChEBI" id="CHEBI:28938"/>
        <dbReference type="ChEBI" id="CHEBI:30616"/>
        <dbReference type="ChEBI" id="CHEBI:43474"/>
        <dbReference type="ChEBI" id="CHEBI:45075"/>
        <dbReference type="ChEBI" id="CHEBI:61036"/>
        <dbReference type="ChEBI" id="CHEBI:456216"/>
        <dbReference type="EC" id="6.3.4.20"/>
    </reaction>
</comment>
<comment type="cofactor">
    <cofactor evidence="1">
        <name>Zn(2+)</name>
        <dbReference type="ChEBI" id="CHEBI:29105"/>
    </cofactor>
    <text evidence="1">Binds 1 zinc ion per subunit.</text>
</comment>
<comment type="pathway">
    <text>Purine metabolism; 7-cyano-7-deazaguanine biosynthesis.</text>
</comment>
<comment type="similarity">
    <text evidence="2">Belongs to the QueC family.</text>
</comment>
<dbReference type="EC" id="6.3.4.20"/>
<dbReference type="EMBL" id="BA000023">
    <property type="protein sequence ID" value="BAK54686.1"/>
    <property type="molecule type" value="Genomic_DNA"/>
</dbReference>
<dbReference type="RefSeq" id="WP_010979963.1">
    <property type="nucleotide sequence ID" value="NC_003106.2"/>
</dbReference>
<dbReference type="SMR" id="Q96ZD9"/>
<dbReference type="STRING" id="273063.STK_18920"/>
<dbReference type="GeneID" id="1459951"/>
<dbReference type="KEGG" id="sto:STK_18920"/>
<dbReference type="PATRIC" id="fig|273063.9.peg.2153"/>
<dbReference type="eggNOG" id="arCOG00039">
    <property type="taxonomic scope" value="Archaea"/>
</dbReference>
<dbReference type="OrthoDB" id="6532at2157"/>
<dbReference type="UniPathway" id="UPA00391"/>
<dbReference type="Proteomes" id="UP000001015">
    <property type="component" value="Chromosome"/>
</dbReference>
<dbReference type="GO" id="GO:0005524">
    <property type="term" value="F:ATP binding"/>
    <property type="evidence" value="ECO:0007669"/>
    <property type="project" value="UniProtKB-KW"/>
</dbReference>
<dbReference type="GO" id="GO:0016874">
    <property type="term" value="F:ligase activity"/>
    <property type="evidence" value="ECO:0007669"/>
    <property type="project" value="UniProtKB-KW"/>
</dbReference>
<dbReference type="GO" id="GO:0046872">
    <property type="term" value="F:metal ion binding"/>
    <property type="evidence" value="ECO:0007669"/>
    <property type="project" value="UniProtKB-KW"/>
</dbReference>
<dbReference type="CDD" id="cd01995">
    <property type="entry name" value="QueC-like"/>
    <property type="match status" value="1"/>
</dbReference>
<dbReference type="Gene3D" id="3.40.50.620">
    <property type="entry name" value="HUPs"/>
    <property type="match status" value="1"/>
</dbReference>
<dbReference type="InterPro" id="IPR018317">
    <property type="entry name" value="QueC"/>
</dbReference>
<dbReference type="InterPro" id="IPR014729">
    <property type="entry name" value="Rossmann-like_a/b/a_fold"/>
</dbReference>
<dbReference type="PANTHER" id="PTHR42914">
    <property type="entry name" value="7-CYANO-7-DEAZAGUANINE SYNTHASE"/>
    <property type="match status" value="1"/>
</dbReference>
<dbReference type="PANTHER" id="PTHR42914:SF1">
    <property type="entry name" value="7-CYANO-7-DEAZAGUANINE SYNTHASE"/>
    <property type="match status" value="1"/>
</dbReference>
<dbReference type="Pfam" id="PF06508">
    <property type="entry name" value="QueC"/>
    <property type="match status" value="1"/>
</dbReference>
<dbReference type="PIRSF" id="PIRSF006293">
    <property type="entry name" value="ExsB"/>
    <property type="match status" value="1"/>
</dbReference>
<dbReference type="SUPFAM" id="SSF52402">
    <property type="entry name" value="Adenine nucleotide alpha hydrolases-like"/>
    <property type="match status" value="1"/>
</dbReference>
<accession>Q96ZD9</accession>
<accession>F9VNP0</accession>
<name>QUEC1_SULTO</name>
<keyword id="KW-0067">ATP-binding</keyword>
<keyword id="KW-0436">Ligase</keyword>
<keyword id="KW-0479">Metal-binding</keyword>
<keyword id="KW-0547">Nucleotide-binding</keyword>
<keyword id="KW-1185">Reference proteome</keyword>
<keyword id="KW-0862">Zinc</keyword>
<evidence type="ECO:0000250" key="1"/>
<evidence type="ECO:0000305" key="2"/>
<proteinExistence type="inferred from homology"/>
<reference key="1">
    <citation type="journal article" date="2001" name="DNA Res.">
        <title>Complete genome sequence of an aerobic thermoacidophilic Crenarchaeon, Sulfolobus tokodaii strain7.</title>
        <authorList>
            <person name="Kawarabayasi Y."/>
            <person name="Hino Y."/>
            <person name="Horikawa H."/>
            <person name="Jin-no K."/>
            <person name="Takahashi M."/>
            <person name="Sekine M."/>
            <person name="Baba S."/>
            <person name="Ankai A."/>
            <person name="Kosugi H."/>
            <person name="Hosoyama A."/>
            <person name="Fukui S."/>
            <person name="Nagai Y."/>
            <person name="Nishijima K."/>
            <person name="Otsuka R."/>
            <person name="Nakazawa H."/>
            <person name="Takamiya M."/>
            <person name="Kato Y."/>
            <person name="Yoshizawa T."/>
            <person name="Tanaka T."/>
            <person name="Kudoh Y."/>
            <person name="Yamazaki J."/>
            <person name="Kushida N."/>
            <person name="Oguchi A."/>
            <person name="Aoki K."/>
            <person name="Masuda S."/>
            <person name="Yanagii M."/>
            <person name="Nishimura M."/>
            <person name="Yamagishi A."/>
            <person name="Oshima T."/>
            <person name="Kikuchi H."/>
        </authorList>
    </citation>
    <scope>NUCLEOTIDE SEQUENCE [LARGE SCALE GENOMIC DNA]</scope>
    <source>
        <strain>DSM 16993 / JCM 10545 / NBRC 100140 / 7</strain>
    </source>
</reference>
<protein>
    <recommendedName>
        <fullName>7-cyano-7-deazaguanine synthase 1</fullName>
        <ecNumber>6.3.4.20</ecNumber>
    </recommendedName>
    <alternativeName>
        <fullName>7-cyano-7-carbaguanine synthase 1</fullName>
    </alternativeName>
    <alternativeName>
        <fullName>Archaeosine biosynthesis protein QueC 1</fullName>
    </alternativeName>
    <alternativeName>
        <fullName>PreQ(0) synthase 1</fullName>
    </alternativeName>
</protein>
<organism>
    <name type="scientific">Sulfurisphaera tokodaii (strain DSM 16993 / JCM 10545 / NBRC 100140 / 7)</name>
    <name type="common">Sulfolobus tokodaii</name>
    <dbReference type="NCBI Taxonomy" id="273063"/>
    <lineage>
        <taxon>Archaea</taxon>
        <taxon>Thermoproteota</taxon>
        <taxon>Thermoprotei</taxon>
        <taxon>Sulfolobales</taxon>
        <taxon>Sulfolobaceae</taxon>
        <taxon>Sulfurisphaera</taxon>
    </lineage>
</organism>